<accession>P48746</accession>
<sequence length="1237" mass="136536">MSSAPRRPASGADSFRTPEPESLGPGTPGFPEQEEDELHRTLGVERFEEILQEAGSRGGEEPGRSYGEEDFEYHRQSSHHIHHPLSTHLPPDARRRKTPQGPGRKPRRRPGASPTGATPTIEEGEEDEEEANEAEGARAPTEPSPASTPSSVQFFLQEDEGAERKAERTSPSPPTLLPHQEAAPWATEGAQTGVPVEEVAVVASGTAGGDNGGASGRPLTKAQPGHRSYNLQERRRIGSMTGAEQALLPRVPTDESEAQTLATADLDLMKSHRFEDVPGVRRHLVRKNAKGSAQSSREGREPGPTPRSRPRAPHKPHEVFVELNELLLDKNQEPQWRETARWIKFEEDVEEETERWGKPHVASLSFRSLLELRRTLAHGAVLLDLDQQTLPGVAHQVVEQMVISDQIKAEDRANVLRALLLKHSHPSDEKDFSFPRNISAGSLGSLLGHHHGQGAESDPHVTEPLIGGIPETRLDVERERDVPPSAPPAGITRSKSKHELKLLEKIPENAEATVVLVGCVEFLSRPTMAFVRLREAVELDAVLEVPVPVRFLFLLLGPSSANMDYHEIGRSISTLMSDKQFHEAAYLADEREDLLTAINAFLDCSVVLPPSEVQGEELLRSVAHFQRQMLKKREEQGRLLPPGLGLEPKSAQDKALLQMVEAAGAAEDDPLRRTGRPFGGLIRDVRRRYPHYLSDFRDALDPQCVAAVIFIYFAALSPAITFGGLLGEKTQDLIGVSELIMSTALQGVIFCLLGAQPLLVIGFSGPLLVFEEAFFTFCSSNQLEYLVGRVWIGFWLVLLALLMVALEGSFLVRFVSRFTQEIFAFLISLIFIYETFYKLIKIFQEHPLHGCSVSNSSETDSSENATWAGAGSTLGPANRSSAGQAGQGRPRGQPNTALLSLVLMAGTFFIAFFLRKFKNSRFFPGRIRRVIGDFGVPIAILIMVLVDYSIEDTYTQKLSVPSGFSVTAPDKRGWVINPLGEKSPFPVWMMVASLLPAILVFILIFMETQITTLIISKKERMLQKGSGFHLDLLLIVAMGGICALFGLPWLAAATVRSVTHANALTVMSKAVAPGDKPKIQEVKEQRVTGLLVALLVGLSIVIGDLLRQIPLAVLFGIFLYMGVTSLNGIQFYERLHLLLMPPKHHPDVTYVKKVRTLRMHLFTALQLLCLALLWAVMSTAASLAFPFILILTVPLRMVVLTRIFTEREMKCLDANEAEPVFDEREGVDEYNEMPMPV</sequence>
<feature type="chain" id="PRO_0000079217" description="Anion exchange protein 2">
    <location>
        <begin position="1"/>
        <end position="1237"/>
    </location>
</feature>
<feature type="topological domain" description="Cytoplasmic" evidence="4">
    <location>
        <begin position="1"/>
        <end position="703"/>
    </location>
</feature>
<feature type="transmembrane region" description="Helical" evidence="4">
    <location>
        <begin position="704"/>
        <end position="727"/>
    </location>
</feature>
<feature type="transmembrane region" description="Helical" evidence="4">
    <location>
        <begin position="733"/>
        <end position="770"/>
    </location>
</feature>
<feature type="transmembrane region" description="Helical" evidence="4">
    <location>
        <begin position="790"/>
        <end position="812"/>
    </location>
</feature>
<feature type="transmembrane region" description="Helical" evidence="4">
    <location>
        <begin position="822"/>
        <end position="843"/>
    </location>
</feature>
<feature type="topological domain" description="Extracellular" evidence="4">
    <location>
        <begin position="844"/>
        <end position="896"/>
    </location>
</feature>
<feature type="transmembrane region" description="Helical" evidence="4">
    <location>
        <begin position="897"/>
        <end position="914"/>
    </location>
</feature>
<feature type="topological domain" description="Cytoplasmic" evidence="4">
    <location>
        <begin position="915"/>
        <end position="929"/>
    </location>
</feature>
<feature type="transmembrane region" description="Helical" evidence="4">
    <location>
        <begin position="930"/>
        <end position="950"/>
    </location>
</feature>
<feature type="transmembrane region" description="Helical" evidence="4">
    <location>
        <begin position="984"/>
        <end position="1006"/>
    </location>
</feature>
<feature type="transmembrane region" description="Helical" evidence="4">
    <location>
        <begin position="1032"/>
        <end position="1053"/>
    </location>
</feature>
<feature type="transmembrane region" description="Helical" evidence="4">
    <location>
        <begin position="1087"/>
        <end position="1132"/>
    </location>
</feature>
<feature type="transmembrane region" description="Helical" evidence="4">
    <location>
        <begin position="1159"/>
        <end position="1195"/>
    </location>
</feature>
<feature type="region of interest" description="Disordered" evidence="5">
    <location>
        <begin position="1"/>
        <end position="237"/>
    </location>
</feature>
<feature type="region of interest" description="Disordered" evidence="5">
    <location>
        <begin position="281"/>
        <end position="316"/>
    </location>
</feature>
<feature type="region of interest" description="Disordered" evidence="5">
    <location>
        <begin position="445"/>
        <end position="464"/>
    </location>
</feature>
<feature type="region of interest" description="Membrane (anion exchange)">
    <location>
        <begin position="704"/>
        <end position="1237"/>
    </location>
</feature>
<feature type="compositionally biased region" description="Basic and acidic residues" evidence="5">
    <location>
        <begin position="37"/>
        <end position="49"/>
    </location>
</feature>
<feature type="compositionally biased region" description="Basic and acidic residues" evidence="5">
    <location>
        <begin position="58"/>
        <end position="75"/>
    </location>
</feature>
<feature type="compositionally biased region" description="Basic residues" evidence="5">
    <location>
        <begin position="76"/>
        <end position="85"/>
    </location>
</feature>
<feature type="compositionally biased region" description="Basic residues" evidence="5">
    <location>
        <begin position="94"/>
        <end position="110"/>
    </location>
</feature>
<feature type="compositionally biased region" description="Acidic residues" evidence="5">
    <location>
        <begin position="122"/>
        <end position="133"/>
    </location>
</feature>
<feature type="compositionally biased region" description="Low complexity" evidence="5">
    <location>
        <begin position="137"/>
        <end position="151"/>
    </location>
</feature>
<feature type="compositionally biased region" description="Gly residues" evidence="5">
    <location>
        <begin position="206"/>
        <end position="215"/>
    </location>
</feature>
<feature type="modified residue" description="Phosphoserine" evidence="2">
    <location>
        <position position="113"/>
    </location>
</feature>
<feature type="modified residue" description="Phosphoserine" evidence="2">
    <location>
        <position position="144"/>
    </location>
</feature>
<feature type="modified residue" description="Phosphoserine" evidence="3">
    <location>
        <position position="170"/>
    </location>
</feature>
<feature type="modified residue" description="Phosphoserine" evidence="3">
    <location>
        <position position="172"/>
    </location>
</feature>
<feature type="modified residue" description="Phosphoserine" evidence="2">
    <location>
        <position position="239"/>
    </location>
</feature>
<feature type="modified residue" description="Phosphothreonine" evidence="3">
    <location>
        <position position="253"/>
    </location>
</feature>
<feature type="modified residue" description="N6-methyllysine" evidence="2">
    <location>
        <position position="270"/>
    </location>
</feature>
<feature type="modified residue" description="Phosphoserine" evidence="2">
    <location>
        <position position="439"/>
    </location>
</feature>
<feature type="lipid moiety-binding region" description="S-palmitoyl cysteine" evidence="1">
    <location>
        <position position="1169"/>
    </location>
</feature>
<feature type="glycosylation site" description="N-linked (GlcNAc...) asparagine" evidence="4">
    <location>
        <position position="855"/>
    </location>
</feature>
<feature type="glycosylation site" description="N-linked (GlcNAc...) asparagine" evidence="4">
    <location>
        <position position="864"/>
    </location>
</feature>
<feature type="glycosylation site" description="N-linked (GlcNAc...) asparagine" evidence="4">
    <location>
        <position position="878"/>
    </location>
</feature>
<organism>
    <name type="scientific">Oryctolagus cuniculus</name>
    <name type="common">Rabbit</name>
    <dbReference type="NCBI Taxonomy" id="9986"/>
    <lineage>
        <taxon>Eukaryota</taxon>
        <taxon>Metazoa</taxon>
        <taxon>Chordata</taxon>
        <taxon>Craniata</taxon>
        <taxon>Vertebrata</taxon>
        <taxon>Euteleostomi</taxon>
        <taxon>Mammalia</taxon>
        <taxon>Eutheria</taxon>
        <taxon>Euarchontoglires</taxon>
        <taxon>Glires</taxon>
        <taxon>Lagomorpha</taxon>
        <taxon>Leporidae</taxon>
        <taxon>Oryctolagus</taxon>
    </lineage>
</organism>
<evidence type="ECO:0000250" key="1"/>
<evidence type="ECO:0000250" key="2">
    <source>
        <dbReference type="UniProtKB" id="P04920"/>
    </source>
</evidence>
<evidence type="ECO:0000250" key="3">
    <source>
        <dbReference type="UniProtKB" id="P13808"/>
    </source>
</evidence>
<evidence type="ECO:0000255" key="4"/>
<evidence type="ECO:0000256" key="5">
    <source>
        <dbReference type="SAM" id="MobiDB-lite"/>
    </source>
</evidence>
<evidence type="ECO:0000269" key="6">
    <source>
    </source>
</evidence>
<evidence type="ECO:0000305" key="7"/>
<dbReference type="EMBL" id="S45791">
    <property type="protein sequence ID" value="AAB23488.1"/>
    <property type="molecule type" value="mRNA"/>
</dbReference>
<dbReference type="PIR" id="A56764">
    <property type="entry name" value="A56764"/>
</dbReference>
<dbReference type="RefSeq" id="NP_001075788.1">
    <property type="nucleotide sequence ID" value="NM_001082319.1"/>
</dbReference>
<dbReference type="SMR" id="P48746"/>
<dbReference type="FunCoup" id="P48746">
    <property type="interactions" value="170"/>
</dbReference>
<dbReference type="STRING" id="9986.ENSOCUP00000049524"/>
<dbReference type="GlyCosmos" id="P48746">
    <property type="glycosylation" value="3 sites, No reported glycans"/>
</dbReference>
<dbReference type="GeneID" id="100009159"/>
<dbReference type="KEGG" id="ocu:100009159"/>
<dbReference type="CTD" id="6522"/>
<dbReference type="InParanoid" id="P48746"/>
<dbReference type="OrthoDB" id="1735926at2759"/>
<dbReference type="Proteomes" id="UP000001811">
    <property type="component" value="Unplaced"/>
</dbReference>
<dbReference type="GO" id="GO:0016324">
    <property type="term" value="C:apical plasma membrane"/>
    <property type="evidence" value="ECO:0007669"/>
    <property type="project" value="UniProtKB-SubCell"/>
</dbReference>
<dbReference type="GO" id="GO:0016323">
    <property type="term" value="C:basolateral plasma membrane"/>
    <property type="evidence" value="ECO:0000250"/>
    <property type="project" value="UniProtKB"/>
</dbReference>
<dbReference type="GO" id="GO:0140900">
    <property type="term" value="F:chloride:bicarbonate antiporter activity"/>
    <property type="evidence" value="ECO:0000250"/>
    <property type="project" value="UniProtKB"/>
</dbReference>
<dbReference type="GO" id="GO:0043377">
    <property type="term" value="P:negative regulation of CD8-positive, alpha-beta T cell differentiation"/>
    <property type="evidence" value="ECO:0000250"/>
    <property type="project" value="UniProtKB"/>
</dbReference>
<dbReference type="GO" id="GO:2000565">
    <property type="term" value="P:negative regulation of CD8-positive, alpha-beta T cell proliferation"/>
    <property type="evidence" value="ECO:0000250"/>
    <property type="project" value="UniProtKB"/>
</dbReference>
<dbReference type="GO" id="GO:0030316">
    <property type="term" value="P:osteoclast differentiation"/>
    <property type="evidence" value="ECO:0000250"/>
    <property type="project" value="UniProtKB"/>
</dbReference>
<dbReference type="GO" id="GO:0032956">
    <property type="term" value="P:regulation of actin cytoskeleton organization"/>
    <property type="evidence" value="ECO:0000250"/>
    <property type="project" value="UniProtKB"/>
</dbReference>
<dbReference type="GO" id="GO:0045124">
    <property type="term" value="P:regulation of bone resorption"/>
    <property type="evidence" value="ECO:0000250"/>
    <property type="project" value="UniProtKB"/>
</dbReference>
<dbReference type="GO" id="GO:0051453">
    <property type="term" value="P:regulation of intracellular pH"/>
    <property type="evidence" value="ECO:0007669"/>
    <property type="project" value="TreeGrafter"/>
</dbReference>
<dbReference type="FunFam" id="1.10.287.570:FF:000001">
    <property type="entry name" value="Anion exchange protein"/>
    <property type="match status" value="1"/>
</dbReference>
<dbReference type="FunFam" id="3.40.930.10:FF:000004">
    <property type="entry name" value="Anion exchange protein"/>
    <property type="match status" value="1"/>
</dbReference>
<dbReference type="Gene3D" id="1.10.287.570">
    <property type="entry name" value="Helical hairpin bin"/>
    <property type="match status" value="1"/>
</dbReference>
<dbReference type="Gene3D" id="3.40.930.10">
    <property type="entry name" value="Mannitol-specific EII, Chain A"/>
    <property type="match status" value="1"/>
</dbReference>
<dbReference type="InterPro" id="IPR001717">
    <property type="entry name" value="Anion_exchange"/>
</dbReference>
<dbReference type="InterPro" id="IPR002978">
    <property type="entry name" value="Anion_exchange_2"/>
</dbReference>
<dbReference type="InterPro" id="IPR018241">
    <property type="entry name" value="Anion_exchange_CS"/>
</dbReference>
<dbReference type="InterPro" id="IPR013769">
    <property type="entry name" value="Band3_cytoplasmic_dom"/>
</dbReference>
<dbReference type="InterPro" id="IPR011531">
    <property type="entry name" value="HCO3_transpt-like_TM_dom"/>
</dbReference>
<dbReference type="InterPro" id="IPR003020">
    <property type="entry name" value="HCO3_transpt_euk"/>
</dbReference>
<dbReference type="InterPro" id="IPR016152">
    <property type="entry name" value="PTrfase/Anion_transptr"/>
</dbReference>
<dbReference type="NCBIfam" id="TIGR00834">
    <property type="entry name" value="ae"/>
    <property type="match status" value="1"/>
</dbReference>
<dbReference type="PANTHER" id="PTHR11453">
    <property type="entry name" value="ANION EXCHANGE PROTEIN"/>
    <property type="match status" value="1"/>
</dbReference>
<dbReference type="PANTHER" id="PTHR11453:SF14">
    <property type="entry name" value="ANION EXCHANGE PROTEIN 2"/>
    <property type="match status" value="1"/>
</dbReference>
<dbReference type="Pfam" id="PF07565">
    <property type="entry name" value="Band_3_cyto"/>
    <property type="match status" value="1"/>
</dbReference>
<dbReference type="Pfam" id="PF00955">
    <property type="entry name" value="HCO3_cotransp"/>
    <property type="match status" value="1"/>
</dbReference>
<dbReference type="PRINTS" id="PR00165">
    <property type="entry name" value="ANIONEXCHNGR"/>
</dbReference>
<dbReference type="PRINTS" id="PR01188">
    <property type="entry name" value="ANIONEXHNGR2"/>
</dbReference>
<dbReference type="PRINTS" id="PR01231">
    <property type="entry name" value="HCO3TRNSPORT"/>
</dbReference>
<dbReference type="SUPFAM" id="SSF55804">
    <property type="entry name" value="Phoshotransferase/anion transport protein"/>
    <property type="match status" value="1"/>
</dbReference>
<dbReference type="PROSITE" id="PS00219">
    <property type="entry name" value="ANION_EXCHANGER_1"/>
    <property type="match status" value="1"/>
</dbReference>
<dbReference type="PROSITE" id="PS00220">
    <property type="entry name" value="ANION_EXCHANGER_2"/>
    <property type="match status" value="1"/>
</dbReference>
<name>B3A2_RABIT</name>
<proteinExistence type="evidence at protein level"/>
<gene>
    <name type="primary">SLC4A2</name>
    <name type="synonym">AE2</name>
</gene>
<reference key="1">
    <citation type="journal article" date="1992" name="Am. J. Physiol.">
        <title>cDNA cloning and localization of a band 3-related protein from ileum.</title>
        <authorList>
            <person name="Chow A."/>
            <person name="Dobbins J.W."/>
            <person name="Aronson P.S."/>
            <person name="Igarashi P."/>
        </authorList>
    </citation>
    <scope>NUCLEOTIDE SEQUENCE [MRNA]</scope>
    <scope>SUBCELLULAR LOCATION</scope>
    <scope>TISSUE SPECIFICITY</scope>
    <source>
        <strain>New Zealand white</strain>
    </source>
</reference>
<keyword id="KW-0039">Anion exchange</keyword>
<keyword id="KW-0050">Antiport</keyword>
<keyword id="KW-1003">Cell membrane</keyword>
<keyword id="KW-0325">Glycoprotein</keyword>
<keyword id="KW-0406">Ion transport</keyword>
<keyword id="KW-0449">Lipoprotein</keyword>
<keyword id="KW-0472">Membrane</keyword>
<keyword id="KW-0488">Methylation</keyword>
<keyword id="KW-0564">Palmitate</keyword>
<keyword id="KW-0597">Phosphoprotein</keyword>
<keyword id="KW-1185">Reference proteome</keyword>
<keyword id="KW-0812">Transmembrane</keyword>
<keyword id="KW-1133">Transmembrane helix</keyword>
<keyword id="KW-0813">Transport</keyword>
<protein>
    <recommendedName>
        <fullName>Anion exchange protein 2</fullName>
        <shortName>AE 2</shortName>
        <shortName>Anion exchanger 2</shortName>
    </recommendedName>
    <alternativeName>
        <fullName>Band 3-related protein</fullName>
        <shortName>B3RP</shortName>
    </alternativeName>
    <alternativeName>
        <fullName>Solute carrier family 4 member 2</fullName>
    </alternativeName>
</protein>
<comment type="function">
    <text evidence="3">Sodium-independent anion exchanger which mediates the electroneutral exchange of chloride for bicarbonate ions across the cell membrane (By similarity). Plays an important role in osteoclast differentiation and function (By similarity). Regulates bone resorption and calpain-dependent actin cytoskeleton organization in osteoclasts via anion exchange-dependent control of pH (By similarity). Essential for intracellular pH regulation in CD8(+) T-cells upon CD3 stimulation, modulating CD8(+) T-cell response (By similarity).</text>
</comment>
<comment type="catalytic activity">
    <reaction evidence="3">
        <text>hydrogencarbonate(in) + chloride(out) = hydrogencarbonate(out) + chloride(in)</text>
        <dbReference type="Rhea" id="RHEA:72363"/>
        <dbReference type="ChEBI" id="CHEBI:17544"/>
        <dbReference type="ChEBI" id="CHEBI:17996"/>
    </reaction>
</comment>
<comment type="subcellular location">
    <subcellularLocation>
        <location evidence="6">Cell membrane</location>
        <topology evidence="4">Multi-pass membrane protein</topology>
    </subcellularLocation>
    <subcellularLocation>
        <location evidence="2">Apical cell membrane</location>
        <topology evidence="4">Multi-pass membrane protein</topology>
    </subcellularLocation>
    <subcellularLocation>
        <location evidence="2">Basolateral cell membrane</location>
        <topology evidence="4">Multi-pass membrane protein</topology>
    </subcellularLocation>
    <text evidence="6">Present in the ileal brush border membrane.</text>
</comment>
<comment type="tissue specificity">
    <text evidence="6">Expressed in the ileum (at protein level).</text>
</comment>
<comment type="similarity">
    <text evidence="7">Belongs to the anion exchanger (TC 2.A.31) family.</text>
</comment>